<proteinExistence type="inferred from homology"/>
<name>ARLY_METM5</name>
<comment type="catalytic activity">
    <reaction evidence="1">
        <text>2-(N(omega)-L-arginino)succinate = fumarate + L-arginine</text>
        <dbReference type="Rhea" id="RHEA:24020"/>
        <dbReference type="ChEBI" id="CHEBI:29806"/>
        <dbReference type="ChEBI" id="CHEBI:32682"/>
        <dbReference type="ChEBI" id="CHEBI:57472"/>
        <dbReference type="EC" id="4.3.2.1"/>
    </reaction>
</comment>
<comment type="pathway">
    <text evidence="1">Amino-acid biosynthesis; L-arginine biosynthesis; L-arginine from L-ornithine and carbamoyl phosphate: step 3/3.</text>
</comment>
<comment type="subcellular location">
    <subcellularLocation>
        <location evidence="1">Cytoplasm</location>
    </subcellularLocation>
</comment>
<comment type="similarity">
    <text evidence="1">Belongs to the lyase 1 family. Argininosuccinate lyase subfamily.</text>
</comment>
<sequence>MNILRRGRLGSNVKEDVMKFTTSLEFDKEIFESDILCDIAHTTMLVEQNVISEENGKKIIAELKKIAEKGMETLDLDPSLDDIHMVIESELIKELGEDVAGRMHTGRSRNDEVATDLRLSLRKKVLEIITHLITMEKNMLAVSNEHKETLTVGYTHLQQAQPVTFGHQILSHISAIERDISRFFDTYNRINLSPLGCGAMATTGFNLNRKRTQELLGFYGLIENSMDGVSSRDFIVETMANISMLGTNLSKICEELVVFSSAEFNTIEIANEYTSTSSIMPQKKNPDVAEITRAKLSTLNGELVTVLTIMKALPNTYNRDLQEISPHLWKSVYTLIDSIQMVDGMISTVKVNKERMKENAEKNYSTATELADTLVRECGIAFRMAHGIVGELVKRSIEEKVEIKEIISEVLEKNNLSLSQEKIDTALDPFENVKLRNVIGGPAPEEVERAISSFNEKISAYKENLDEKIAEIESVKENLLK</sequence>
<accession>A4G0I4</accession>
<keyword id="KW-0028">Amino-acid biosynthesis</keyword>
<keyword id="KW-0055">Arginine biosynthesis</keyword>
<keyword id="KW-0963">Cytoplasm</keyword>
<keyword id="KW-0456">Lyase</keyword>
<gene>
    <name evidence="1" type="primary">argH</name>
    <name type="ordered locus">MmarC5_1671</name>
</gene>
<dbReference type="EC" id="4.3.2.1" evidence="1"/>
<dbReference type="EMBL" id="CP000609">
    <property type="protein sequence ID" value="ABO35968.1"/>
    <property type="molecule type" value="Genomic_DNA"/>
</dbReference>
<dbReference type="RefSeq" id="WP_011869415.1">
    <property type="nucleotide sequence ID" value="NC_009135.1"/>
</dbReference>
<dbReference type="SMR" id="A4G0I4"/>
<dbReference type="STRING" id="402880.MmarC5_1671"/>
<dbReference type="GeneID" id="4928440"/>
<dbReference type="KEGG" id="mmq:MmarC5_1671"/>
<dbReference type="eggNOG" id="arCOG01748">
    <property type="taxonomic scope" value="Archaea"/>
</dbReference>
<dbReference type="HOGENOM" id="CLU_027272_2_3_2"/>
<dbReference type="OrthoDB" id="27337at2157"/>
<dbReference type="UniPathway" id="UPA00068">
    <property type="reaction ID" value="UER00114"/>
</dbReference>
<dbReference type="Proteomes" id="UP000000253">
    <property type="component" value="Chromosome"/>
</dbReference>
<dbReference type="GO" id="GO:0005829">
    <property type="term" value="C:cytosol"/>
    <property type="evidence" value="ECO:0007669"/>
    <property type="project" value="TreeGrafter"/>
</dbReference>
<dbReference type="GO" id="GO:0004056">
    <property type="term" value="F:argininosuccinate lyase activity"/>
    <property type="evidence" value="ECO:0007669"/>
    <property type="project" value="UniProtKB-UniRule"/>
</dbReference>
<dbReference type="GO" id="GO:0042450">
    <property type="term" value="P:arginine biosynthetic process via ornithine"/>
    <property type="evidence" value="ECO:0007669"/>
    <property type="project" value="InterPro"/>
</dbReference>
<dbReference type="GO" id="GO:0006526">
    <property type="term" value="P:L-arginine biosynthetic process"/>
    <property type="evidence" value="ECO:0007669"/>
    <property type="project" value="UniProtKB-UniRule"/>
</dbReference>
<dbReference type="CDD" id="cd01359">
    <property type="entry name" value="Argininosuccinate_lyase"/>
    <property type="match status" value="1"/>
</dbReference>
<dbReference type="FunFam" id="1.20.200.10:FF:000015">
    <property type="entry name" value="argininosuccinate lyase isoform X2"/>
    <property type="match status" value="1"/>
</dbReference>
<dbReference type="Gene3D" id="1.10.40.30">
    <property type="entry name" value="Fumarase/aspartase (C-terminal domain)"/>
    <property type="match status" value="1"/>
</dbReference>
<dbReference type="Gene3D" id="1.20.200.10">
    <property type="entry name" value="Fumarase/aspartase (Central domain)"/>
    <property type="match status" value="1"/>
</dbReference>
<dbReference type="Gene3D" id="1.10.275.10">
    <property type="entry name" value="Fumarase/aspartase (N-terminal domain)"/>
    <property type="match status" value="1"/>
</dbReference>
<dbReference type="HAMAP" id="MF_00006">
    <property type="entry name" value="Arg_succ_lyase"/>
    <property type="match status" value="1"/>
</dbReference>
<dbReference type="InterPro" id="IPR029419">
    <property type="entry name" value="Arg_succ_lyase_C"/>
</dbReference>
<dbReference type="InterPro" id="IPR009049">
    <property type="entry name" value="Argininosuccinate_lyase"/>
</dbReference>
<dbReference type="InterPro" id="IPR024083">
    <property type="entry name" value="Fumarase/histidase_N"/>
</dbReference>
<dbReference type="InterPro" id="IPR000362">
    <property type="entry name" value="Fumarate_lyase_fam"/>
</dbReference>
<dbReference type="InterPro" id="IPR022761">
    <property type="entry name" value="Fumarate_lyase_N"/>
</dbReference>
<dbReference type="InterPro" id="IPR008948">
    <property type="entry name" value="L-Aspartase-like"/>
</dbReference>
<dbReference type="NCBIfam" id="TIGR00838">
    <property type="entry name" value="argH"/>
    <property type="match status" value="1"/>
</dbReference>
<dbReference type="PANTHER" id="PTHR43814">
    <property type="entry name" value="ARGININOSUCCINATE LYASE"/>
    <property type="match status" value="1"/>
</dbReference>
<dbReference type="PANTHER" id="PTHR43814:SF1">
    <property type="entry name" value="ARGININOSUCCINATE LYASE"/>
    <property type="match status" value="1"/>
</dbReference>
<dbReference type="Pfam" id="PF14698">
    <property type="entry name" value="ASL_C2"/>
    <property type="match status" value="1"/>
</dbReference>
<dbReference type="Pfam" id="PF00206">
    <property type="entry name" value="Lyase_1"/>
    <property type="match status" value="1"/>
</dbReference>
<dbReference type="PRINTS" id="PR00145">
    <property type="entry name" value="ARGSUCLYASE"/>
</dbReference>
<dbReference type="PRINTS" id="PR00149">
    <property type="entry name" value="FUMRATELYASE"/>
</dbReference>
<dbReference type="SUPFAM" id="SSF48557">
    <property type="entry name" value="L-aspartase-like"/>
    <property type="match status" value="1"/>
</dbReference>
<evidence type="ECO:0000255" key="1">
    <source>
        <dbReference type="HAMAP-Rule" id="MF_00006"/>
    </source>
</evidence>
<reference key="1">
    <citation type="submission" date="2007-03" db="EMBL/GenBank/DDBJ databases">
        <title>Complete sequence of chromosome of Methanococcus maripaludis C5.</title>
        <authorList>
            <consortium name="US DOE Joint Genome Institute"/>
            <person name="Copeland A."/>
            <person name="Lucas S."/>
            <person name="Lapidus A."/>
            <person name="Barry K."/>
            <person name="Glavina del Rio T."/>
            <person name="Dalin E."/>
            <person name="Tice H."/>
            <person name="Pitluck S."/>
            <person name="Chertkov O."/>
            <person name="Brettin T."/>
            <person name="Bruce D."/>
            <person name="Han C."/>
            <person name="Detter J.C."/>
            <person name="Schmutz J."/>
            <person name="Larimer F."/>
            <person name="Land M."/>
            <person name="Hauser L."/>
            <person name="Kyrpides N."/>
            <person name="Mikhailova N."/>
            <person name="Sieprawska-Lupa M."/>
            <person name="Whitman W.B."/>
            <person name="Richardson P."/>
        </authorList>
    </citation>
    <scope>NUCLEOTIDE SEQUENCE [LARGE SCALE GENOMIC DNA]</scope>
    <source>
        <strain>C5 / ATCC BAA-1333</strain>
    </source>
</reference>
<feature type="chain" id="PRO_1000000500" description="Argininosuccinate lyase">
    <location>
        <begin position="1"/>
        <end position="481"/>
    </location>
</feature>
<organism>
    <name type="scientific">Methanococcus maripaludis (strain C5 / ATCC BAA-1333)</name>
    <dbReference type="NCBI Taxonomy" id="402880"/>
    <lineage>
        <taxon>Archaea</taxon>
        <taxon>Methanobacteriati</taxon>
        <taxon>Methanobacteriota</taxon>
        <taxon>Methanomada group</taxon>
        <taxon>Methanococci</taxon>
        <taxon>Methanococcales</taxon>
        <taxon>Methanococcaceae</taxon>
        <taxon>Methanococcus</taxon>
    </lineage>
</organism>
<protein>
    <recommendedName>
        <fullName evidence="1">Argininosuccinate lyase</fullName>
        <shortName evidence="1">ASAL</shortName>
        <ecNumber evidence="1">4.3.2.1</ecNumber>
    </recommendedName>
    <alternativeName>
        <fullName evidence="1">Arginosuccinase</fullName>
    </alternativeName>
</protein>